<comment type="function">
    <text evidence="1">One of the primary rRNA binding proteins, it binds directly to 16S rRNA where it nucleates assembly of the body of the 30S subunit.</text>
</comment>
<comment type="function">
    <text evidence="1">With S5 and S12 plays an important role in translational accuracy.</text>
</comment>
<comment type="subunit">
    <text evidence="1">Part of the 30S ribosomal subunit. Contacts protein S5. The interaction surface between S4 and S5 is involved in control of translational fidelity.</text>
</comment>
<comment type="similarity">
    <text evidence="1">Belongs to the universal ribosomal protein uS4 family.</text>
</comment>
<accession>Q4A5T4</accession>
<gene>
    <name evidence="1" type="primary">rpsD</name>
    <name type="ordered locus">MS53_0478</name>
</gene>
<organism>
    <name type="scientific">Mycoplasmopsis synoviae (strain 53)</name>
    <name type="common">Mycoplasma synoviae</name>
    <dbReference type="NCBI Taxonomy" id="262723"/>
    <lineage>
        <taxon>Bacteria</taxon>
        <taxon>Bacillati</taxon>
        <taxon>Mycoplasmatota</taxon>
        <taxon>Mycoplasmoidales</taxon>
        <taxon>Metamycoplasmataceae</taxon>
        <taxon>Mycoplasmopsis</taxon>
    </lineage>
</organism>
<evidence type="ECO:0000255" key="1">
    <source>
        <dbReference type="HAMAP-Rule" id="MF_01306"/>
    </source>
</evidence>
<evidence type="ECO:0000305" key="2"/>
<dbReference type="EMBL" id="AE017245">
    <property type="protein sequence ID" value="AAZ43887.1"/>
    <property type="molecule type" value="Genomic_DNA"/>
</dbReference>
<dbReference type="RefSeq" id="WP_011283616.1">
    <property type="nucleotide sequence ID" value="NC_007294.1"/>
</dbReference>
<dbReference type="SMR" id="Q4A5T4"/>
<dbReference type="STRING" id="262723.MS53_0478"/>
<dbReference type="KEGG" id="msy:MS53_0478"/>
<dbReference type="eggNOG" id="COG0522">
    <property type="taxonomic scope" value="Bacteria"/>
</dbReference>
<dbReference type="HOGENOM" id="CLU_092403_0_1_14"/>
<dbReference type="OrthoDB" id="9803672at2"/>
<dbReference type="Proteomes" id="UP000000549">
    <property type="component" value="Chromosome"/>
</dbReference>
<dbReference type="GO" id="GO:0015935">
    <property type="term" value="C:small ribosomal subunit"/>
    <property type="evidence" value="ECO:0007669"/>
    <property type="project" value="InterPro"/>
</dbReference>
<dbReference type="GO" id="GO:0019843">
    <property type="term" value="F:rRNA binding"/>
    <property type="evidence" value="ECO:0007669"/>
    <property type="project" value="UniProtKB-UniRule"/>
</dbReference>
<dbReference type="GO" id="GO:0003735">
    <property type="term" value="F:structural constituent of ribosome"/>
    <property type="evidence" value="ECO:0007669"/>
    <property type="project" value="InterPro"/>
</dbReference>
<dbReference type="GO" id="GO:0042274">
    <property type="term" value="P:ribosomal small subunit biogenesis"/>
    <property type="evidence" value="ECO:0007669"/>
    <property type="project" value="TreeGrafter"/>
</dbReference>
<dbReference type="GO" id="GO:0006412">
    <property type="term" value="P:translation"/>
    <property type="evidence" value="ECO:0007669"/>
    <property type="project" value="UniProtKB-UniRule"/>
</dbReference>
<dbReference type="CDD" id="cd00165">
    <property type="entry name" value="S4"/>
    <property type="match status" value="1"/>
</dbReference>
<dbReference type="FunFam" id="3.10.290.10:FF:000001">
    <property type="entry name" value="30S ribosomal protein S4"/>
    <property type="match status" value="1"/>
</dbReference>
<dbReference type="Gene3D" id="1.10.1050.10">
    <property type="entry name" value="Ribosomal Protein S4 Delta 41, Chain A, domain 1"/>
    <property type="match status" value="1"/>
</dbReference>
<dbReference type="Gene3D" id="3.10.290.10">
    <property type="entry name" value="RNA-binding S4 domain"/>
    <property type="match status" value="1"/>
</dbReference>
<dbReference type="HAMAP" id="MF_01306_B">
    <property type="entry name" value="Ribosomal_uS4_B"/>
    <property type="match status" value="1"/>
</dbReference>
<dbReference type="InterPro" id="IPR022801">
    <property type="entry name" value="Ribosomal_uS4"/>
</dbReference>
<dbReference type="InterPro" id="IPR005709">
    <property type="entry name" value="Ribosomal_uS4_bac-type"/>
</dbReference>
<dbReference type="InterPro" id="IPR018079">
    <property type="entry name" value="Ribosomal_uS4_CS"/>
</dbReference>
<dbReference type="InterPro" id="IPR001912">
    <property type="entry name" value="Ribosomal_uS4_N"/>
</dbReference>
<dbReference type="InterPro" id="IPR002942">
    <property type="entry name" value="S4_RNA-bd"/>
</dbReference>
<dbReference type="InterPro" id="IPR036986">
    <property type="entry name" value="S4_RNA-bd_sf"/>
</dbReference>
<dbReference type="NCBIfam" id="NF003717">
    <property type="entry name" value="PRK05327.1"/>
    <property type="match status" value="1"/>
</dbReference>
<dbReference type="NCBIfam" id="TIGR01017">
    <property type="entry name" value="rpsD_bact"/>
    <property type="match status" value="1"/>
</dbReference>
<dbReference type="PANTHER" id="PTHR11831">
    <property type="entry name" value="30S 40S RIBOSOMAL PROTEIN"/>
    <property type="match status" value="1"/>
</dbReference>
<dbReference type="PANTHER" id="PTHR11831:SF4">
    <property type="entry name" value="SMALL RIBOSOMAL SUBUNIT PROTEIN US4M"/>
    <property type="match status" value="1"/>
</dbReference>
<dbReference type="Pfam" id="PF00163">
    <property type="entry name" value="Ribosomal_S4"/>
    <property type="match status" value="1"/>
</dbReference>
<dbReference type="Pfam" id="PF01479">
    <property type="entry name" value="S4"/>
    <property type="match status" value="1"/>
</dbReference>
<dbReference type="SMART" id="SM01390">
    <property type="entry name" value="Ribosomal_S4"/>
    <property type="match status" value="1"/>
</dbReference>
<dbReference type="SMART" id="SM00363">
    <property type="entry name" value="S4"/>
    <property type="match status" value="1"/>
</dbReference>
<dbReference type="SUPFAM" id="SSF55174">
    <property type="entry name" value="Alpha-L RNA-binding motif"/>
    <property type="match status" value="1"/>
</dbReference>
<dbReference type="PROSITE" id="PS00632">
    <property type="entry name" value="RIBOSOMAL_S4"/>
    <property type="match status" value="1"/>
</dbReference>
<dbReference type="PROSITE" id="PS50889">
    <property type="entry name" value="S4"/>
    <property type="match status" value="1"/>
</dbReference>
<reference key="1">
    <citation type="journal article" date="2005" name="J. Bacteriol.">
        <title>Swine and poultry pathogens: the complete genome sequences of two strains of Mycoplasma hyopneumoniae and a strain of Mycoplasma synoviae.</title>
        <authorList>
            <person name="Vasconcelos A.T.R."/>
            <person name="Ferreira H.B."/>
            <person name="Bizarro C.V."/>
            <person name="Bonatto S.L."/>
            <person name="Carvalho M.O."/>
            <person name="Pinto P.M."/>
            <person name="Almeida D.F."/>
            <person name="Almeida L.G.P."/>
            <person name="Almeida R."/>
            <person name="Alves-Junior L."/>
            <person name="Assuncao E.N."/>
            <person name="Azevedo V.A.C."/>
            <person name="Bogo M.R."/>
            <person name="Brigido M.M."/>
            <person name="Brocchi M."/>
            <person name="Burity H.A."/>
            <person name="Camargo A.A."/>
            <person name="Camargo S.S."/>
            <person name="Carepo M.S."/>
            <person name="Carraro D.M."/>
            <person name="de Mattos Cascardo J.C."/>
            <person name="Castro L.A."/>
            <person name="Cavalcanti G."/>
            <person name="Chemale G."/>
            <person name="Collevatti R.G."/>
            <person name="Cunha C.W."/>
            <person name="Dallagiovanna B."/>
            <person name="Dambros B.P."/>
            <person name="Dellagostin O.A."/>
            <person name="Falcao C."/>
            <person name="Fantinatti-Garboggini F."/>
            <person name="Felipe M.S.S."/>
            <person name="Fiorentin L."/>
            <person name="Franco G.R."/>
            <person name="Freitas N.S.A."/>
            <person name="Frias D."/>
            <person name="Grangeiro T.B."/>
            <person name="Grisard E.C."/>
            <person name="Guimaraes C.T."/>
            <person name="Hungria M."/>
            <person name="Jardim S.N."/>
            <person name="Krieger M.A."/>
            <person name="Laurino J.P."/>
            <person name="Lima L.F.A."/>
            <person name="Lopes M.I."/>
            <person name="Loreto E.L.S."/>
            <person name="Madeira H.M.F."/>
            <person name="Manfio G.P."/>
            <person name="Maranhao A.Q."/>
            <person name="Martinkovics C.T."/>
            <person name="Medeiros S.R.B."/>
            <person name="Moreira M.A.M."/>
            <person name="Neiva M."/>
            <person name="Ramalho-Neto C.E."/>
            <person name="Nicolas M.F."/>
            <person name="Oliveira S.C."/>
            <person name="Paixao R.F.C."/>
            <person name="Pedrosa F.O."/>
            <person name="Pena S.D.J."/>
            <person name="Pereira M."/>
            <person name="Pereira-Ferrari L."/>
            <person name="Piffer I."/>
            <person name="Pinto L.S."/>
            <person name="Potrich D.P."/>
            <person name="Salim A.C.M."/>
            <person name="Santos F.R."/>
            <person name="Schmitt R."/>
            <person name="Schneider M.P.C."/>
            <person name="Schrank A."/>
            <person name="Schrank I.S."/>
            <person name="Schuck A.F."/>
            <person name="Seuanez H.N."/>
            <person name="Silva D.W."/>
            <person name="Silva R."/>
            <person name="Silva S.C."/>
            <person name="Soares C.M.A."/>
            <person name="Souza K.R.L."/>
            <person name="Souza R.C."/>
            <person name="Staats C.C."/>
            <person name="Steffens M.B.R."/>
            <person name="Teixeira S.M.R."/>
            <person name="Urmenyi T.P."/>
            <person name="Vainstein M.H."/>
            <person name="Zuccherato L.W."/>
            <person name="Simpson A.J.G."/>
            <person name="Zaha A."/>
        </authorList>
    </citation>
    <scope>NUCLEOTIDE SEQUENCE [LARGE SCALE GENOMIC DNA]</scope>
    <source>
        <strain>53</strain>
    </source>
</reference>
<keyword id="KW-1185">Reference proteome</keyword>
<keyword id="KW-0687">Ribonucleoprotein</keyword>
<keyword id="KW-0689">Ribosomal protein</keyword>
<keyword id="KW-0694">RNA-binding</keyword>
<keyword id="KW-0699">rRNA-binding</keyword>
<feature type="chain" id="PRO_0000228903" description="Small ribosomal subunit protein uS4">
    <location>
        <begin position="1"/>
        <end position="199"/>
    </location>
</feature>
<feature type="domain" description="S4 RNA-binding" evidence="1">
    <location>
        <begin position="94"/>
        <end position="157"/>
    </location>
</feature>
<name>RS4_MYCS5</name>
<proteinExistence type="inferred from homology"/>
<sequence>MSRYTGPLFKKSRRFGYSILETNKEFSKGRKRTYAPGQHGNKRVKLSDYGLHLYEKQKVKLVFGVSEKQLLKTYKKAVKSKEITGTVLLQLLESRLDNLVYRAGFATTRRQARQLVNHGHFTIDGKKANIPSMQIKTGTTVVLKETSRKLKLVQEALEMQPASAWVTRKDFQFTFYRVPERTEMHKDIKEALVVEFYAK</sequence>
<protein>
    <recommendedName>
        <fullName evidence="1">Small ribosomal subunit protein uS4</fullName>
    </recommendedName>
    <alternativeName>
        <fullName evidence="2">30S ribosomal protein S4</fullName>
    </alternativeName>
</protein>